<gene>
    <name evidence="1" type="primary">hprK</name>
    <name type="ordered locus">BCQ_4984</name>
</gene>
<name>HPRK_BACCQ</name>
<protein>
    <recommendedName>
        <fullName evidence="1">HPr kinase/phosphorylase</fullName>
        <shortName evidence="1">HPrK/P</shortName>
        <ecNumber evidence="1">2.7.11.-</ecNumber>
        <ecNumber evidence="1">2.7.4.-</ecNumber>
    </recommendedName>
    <alternativeName>
        <fullName evidence="1">HPr(Ser) kinase/phosphorylase</fullName>
    </alternativeName>
</protein>
<comment type="function">
    <text evidence="1">Catalyzes the ATP- as well as the pyrophosphate-dependent phosphorylation of a specific serine residue in HPr, a phosphocarrier protein of the phosphoenolpyruvate-dependent sugar phosphotransferase system (PTS). HprK/P also catalyzes the pyrophosphate-producing, inorganic phosphate-dependent dephosphorylation (phosphorolysis) of seryl-phosphorylated HPr (P-Ser-HPr). The two antagonistic activities of HprK/P are regulated by several intracellular metabolites, which change their concentration in response to the absence or presence of rapidly metabolisable carbon sources (glucose, fructose, etc.) in the growth medium. Also phosphorylates/dephosphorylates the HPr-like catabolite repression protein crh on a specific serine residue. Therefore, by controlling the phosphorylation state of HPr and crh, HPrK/P is a sensor enzyme that plays a major role in the regulation of carbon metabolism and sugar transport: it mediates carbon catabolite repression (CCR), and regulates PTS-catalyzed carbohydrate uptake and inducer exclusion.</text>
</comment>
<comment type="catalytic activity">
    <reaction evidence="1">
        <text>[HPr protein]-L-serine + ATP = [HPr protein]-O-phospho-L-serine + ADP + H(+)</text>
        <dbReference type="Rhea" id="RHEA:46600"/>
        <dbReference type="Rhea" id="RHEA-COMP:11602"/>
        <dbReference type="Rhea" id="RHEA-COMP:11603"/>
        <dbReference type="ChEBI" id="CHEBI:15378"/>
        <dbReference type="ChEBI" id="CHEBI:29999"/>
        <dbReference type="ChEBI" id="CHEBI:30616"/>
        <dbReference type="ChEBI" id="CHEBI:83421"/>
        <dbReference type="ChEBI" id="CHEBI:456216"/>
    </reaction>
</comment>
<comment type="catalytic activity">
    <reaction evidence="1">
        <text>[HPr protein]-O-phospho-L-serine + phosphate + H(+) = [HPr protein]-L-serine + diphosphate</text>
        <dbReference type="Rhea" id="RHEA:46604"/>
        <dbReference type="Rhea" id="RHEA-COMP:11602"/>
        <dbReference type="Rhea" id="RHEA-COMP:11603"/>
        <dbReference type="ChEBI" id="CHEBI:15378"/>
        <dbReference type="ChEBI" id="CHEBI:29999"/>
        <dbReference type="ChEBI" id="CHEBI:33019"/>
        <dbReference type="ChEBI" id="CHEBI:43474"/>
        <dbReference type="ChEBI" id="CHEBI:83421"/>
    </reaction>
</comment>
<comment type="cofactor">
    <cofactor evidence="1">
        <name>Mg(2+)</name>
        <dbReference type="ChEBI" id="CHEBI:18420"/>
    </cofactor>
</comment>
<comment type="subunit">
    <text evidence="1">Homohexamer.</text>
</comment>
<comment type="domain">
    <text evidence="1">The Walker A ATP-binding motif also binds Pi and PPi.</text>
</comment>
<comment type="miscellaneous">
    <text evidence="1">Both phosphorylation and phosphorolysis are carried out by the same active site and suggest a common mechanism for both reactions.</text>
</comment>
<comment type="similarity">
    <text evidence="1">Belongs to the HPrK/P family.</text>
</comment>
<keyword id="KW-0067">ATP-binding</keyword>
<keyword id="KW-0119">Carbohydrate metabolism</keyword>
<keyword id="KW-0418">Kinase</keyword>
<keyword id="KW-0460">Magnesium</keyword>
<keyword id="KW-0479">Metal-binding</keyword>
<keyword id="KW-0511">Multifunctional enzyme</keyword>
<keyword id="KW-0547">Nucleotide-binding</keyword>
<keyword id="KW-0723">Serine/threonine-protein kinase</keyword>
<keyword id="KW-0808">Transferase</keyword>
<sequence length="309" mass="34601">MPKVRTKDLIEQFQLELISGEEGIHRPIDTSDLSRPGIEMAGFFTYYPADRVQLLGKTELTFFDTLTSEQKQERMKALCTEETPCIIVTRNQDVPDELLQASRESGMPLLRSSQTTTRLSSRLTNYLEGKLAPTTAVHGVLVDIYGVGVLITGQSGVGKSETALELVKRGHRLVADDSVEIRQEDEDMLVGSSPDLIEHLLEIRGLGIINVMTLFGAGAVRNYKRITLVINLEIWDQKKNYDRLGLDEEKMKIIDTELTKITLPVRPGRNLAVIIEVAAMNFRLKRMGVNAAQQFSERLMSAIELGNQE</sequence>
<organism>
    <name type="scientific">Bacillus cereus (strain Q1)</name>
    <dbReference type="NCBI Taxonomy" id="361100"/>
    <lineage>
        <taxon>Bacteria</taxon>
        <taxon>Bacillati</taxon>
        <taxon>Bacillota</taxon>
        <taxon>Bacilli</taxon>
        <taxon>Bacillales</taxon>
        <taxon>Bacillaceae</taxon>
        <taxon>Bacillus</taxon>
        <taxon>Bacillus cereus group</taxon>
    </lineage>
</organism>
<dbReference type="EC" id="2.7.11.-" evidence="1"/>
<dbReference type="EC" id="2.7.4.-" evidence="1"/>
<dbReference type="EMBL" id="CP000227">
    <property type="protein sequence ID" value="ACM15384.1"/>
    <property type="molecule type" value="Genomic_DNA"/>
</dbReference>
<dbReference type="SMR" id="B9J5G3"/>
<dbReference type="KEGG" id="bcq:BCQ_4984"/>
<dbReference type="HOGENOM" id="CLU_052030_0_1_9"/>
<dbReference type="Proteomes" id="UP000000441">
    <property type="component" value="Chromosome"/>
</dbReference>
<dbReference type="GO" id="GO:0005524">
    <property type="term" value="F:ATP binding"/>
    <property type="evidence" value="ECO:0007669"/>
    <property type="project" value="UniProtKB-UniRule"/>
</dbReference>
<dbReference type="GO" id="GO:0000287">
    <property type="term" value="F:magnesium ion binding"/>
    <property type="evidence" value="ECO:0007669"/>
    <property type="project" value="UniProtKB-UniRule"/>
</dbReference>
<dbReference type="GO" id="GO:0000155">
    <property type="term" value="F:phosphorelay sensor kinase activity"/>
    <property type="evidence" value="ECO:0007669"/>
    <property type="project" value="InterPro"/>
</dbReference>
<dbReference type="GO" id="GO:0004674">
    <property type="term" value="F:protein serine/threonine kinase activity"/>
    <property type="evidence" value="ECO:0007669"/>
    <property type="project" value="UniProtKB-KW"/>
</dbReference>
<dbReference type="GO" id="GO:0004712">
    <property type="term" value="F:protein serine/threonine/tyrosine kinase activity"/>
    <property type="evidence" value="ECO:0007669"/>
    <property type="project" value="UniProtKB-UniRule"/>
</dbReference>
<dbReference type="GO" id="GO:0006109">
    <property type="term" value="P:regulation of carbohydrate metabolic process"/>
    <property type="evidence" value="ECO:0007669"/>
    <property type="project" value="UniProtKB-UniRule"/>
</dbReference>
<dbReference type="CDD" id="cd01918">
    <property type="entry name" value="HprK_C"/>
    <property type="match status" value="1"/>
</dbReference>
<dbReference type="FunFam" id="3.40.1390.20:FF:000002">
    <property type="entry name" value="HPr kinase/phosphorylase"/>
    <property type="match status" value="1"/>
</dbReference>
<dbReference type="FunFam" id="3.40.50.300:FF:000174">
    <property type="entry name" value="HPr kinase/phosphorylase"/>
    <property type="match status" value="1"/>
</dbReference>
<dbReference type="Gene3D" id="3.40.1390.20">
    <property type="entry name" value="HprK N-terminal domain-like"/>
    <property type="match status" value="1"/>
</dbReference>
<dbReference type="Gene3D" id="3.40.50.300">
    <property type="entry name" value="P-loop containing nucleotide triphosphate hydrolases"/>
    <property type="match status" value="1"/>
</dbReference>
<dbReference type="HAMAP" id="MF_01249">
    <property type="entry name" value="HPr_kinase"/>
    <property type="match status" value="1"/>
</dbReference>
<dbReference type="InterPro" id="IPR003755">
    <property type="entry name" value="HPr(Ser)_kin/Pase"/>
</dbReference>
<dbReference type="InterPro" id="IPR011104">
    <property type="entry name" value="Hpr_kin/Pase_C"/>
</dbReference>
<dbReference type="InterPro" id="IPR011126">
    <property type="entry name" value="Hpr_kin/Pase_Hpr_N"/>
</dbReference>
<dbReference type="InterPro" id="IPR027417">
    <property type="entry name" value="P-loop_NTPase"/>
</dbReference>
<dbReference type="InterPro" id="IPR028979">
    <property type="entry name" value="Ser_kin/Pase_Hpr-like_N_sf"/>
</dbReference>
<dbReference type="NCBIfam" id="TIGR00679">
    <property type="entry name" value="hpr-ser"/>
    <property type="match status" value="1"/>
</dbReference>
<dbReference type="PANTHER" id="PTHR30305:SF1">
    <property type="entry name" value="HPR KINASE_PHOSPHORYLASE"/>
    <property type="match status" value="1"/>
</dbReference>
<dbReference type="PANTHER" id="PTHR30305">
    <property type="entry name" value="PROTEIN YJDM-RELATED"/>
    <property type="match status" value="1"/>
</dbReference>
<dbReference type="Pfam" id="PF07475">
    <property type="entry name" value="Hpr_kinase_C"/>
    <property type="match status" value="1"/>
</dbReference>
<dbReference type="Pfam" id="PF02603">
    <property type="entry name" value="Hpr_kinase_N"/>
    <property type="match status" value="1"/>
</dbReference>
<dbReference type="SUPFAM" id="SSF75138">
    <property type="entry name" value="HprK N-terminal domain-like"/>
    <property type="match status" value="1"/>
</dbReference>
<dbReference type="SUPFAM" id="SSF53795">
    <property type="entry name" value="PEP carboxykinase-like"/>
    <property type="match status" value="1"/>
</dbReference>
<proteinExistence type="inferred from homology"/>
<accession>B9J5G3</accession>
<feature type="chain" id="PRO_1000165069" description="HPr kinase/phosphorylase">
    <location>
        <begin position="1"/>
        <end position="309"/>
    </location>
</feature>
<feature type="region of interest" description="Important for the catalytic mechanism of both phosphorylation and dephosphorylation" evidence="1">
    <location>
        <begin position="201"/>
        <end position="210"/>
    </location>
</feature>
<feature type="region of interest" description="Important for the catalytic mechanism of dephosphorylation" evidence="1">
    <location>
        <begin position="264"/>
        <end position="269"/>
    </location>
</feature>
<feature type="active site" evidence="1">
    <location>
        <position position="138"/>
    </location>
</feature>
<feature type="active site" evidence="1">
    <location>
        <position position="159"/>
    </location>
</feature>
<feature type="active site" description="Proton acceptor; for phosphorylation activity. Proton donor; for dephosphorylation activity" evidence="1">
    <location>
        <position position="177"/>
    </location>
</feature>
<feature type="active site" evidence="1">
    <location>
        <position position="243"/>
    </location>
</feature>
<feature type="binding site" evidence="1">
    <location>
        <begin position="153"/>
        <end position="160"/>
    </location>
    <ligand>
        <name>ATP</name>
        <dbReference type="ChEBI" id="CHEBI:30616"/>
    </ligand>
</feature>
<feature type="binding site" evidence="1">
    <location>
        <position position="160"/>
    </location>
    <ligand>
        <name>Mg(2+)</name>
        <dbReference type="ChEBI" id="CHEBI:18420"/>
    </ligand>
</feature>
<feature type="binding site" evidence="1">
    <location>
        <position position="202"/>
    </location>
    <ligand>
        <name>Mg(2+)</name>
        <dbReference type="ChEBI" id="CHEBI:18420"/>
    </ligand>
</feature>
<reference key="1">
    <citation type="journal article" date="2009" name="J. Bacteriol.">
        <title>Complete genome sequence of the extremophilic Bacillus cereus strain Q1 with industrial applications.</title>
        <authorList>
            <person name="Xiong Z."/>
            <person name="Jiang Y."/>
            <person name="Qi D."/>
            <person name="Lu H."/>
            <person name="Yang F."/>
            <person name="Yang J."/>
            <person name="Chen L."/>
            <person name="Sun L."/>
            <person name="Xu X."/>
            <person name="Xue Y."/>
            <person name="Zhu Y."/>
            <person name="Jin Q."/>
        </authorList>
    </citation>
    <scope>NUCLEOTIDE SEQUENCE [LARGE SCALE GENOMIC DNA]</scope>
    <source>
        <strain>Q1</strain>
    </source>
</reference>
<evidence type="ECO:0000255" key="1">
    <source>
        <dbReference type="HAMAP-Rule" id="MF_01249"/>
    </source>
</evidence>